<gene>
    <name evidence="1" type="primary">dapA</name>
    <name type="ordered locus">Mrad2831_1890</name>
</gene>
<comment type="function">
    <text evidence="1">Catalyzes the condensation of (S)-aspartate-beta-semialdehyde [(S)-ASA] and pyruvate to 4-hydroxy-tetrahydrodipicolinate (HTPA).</text>
</comment>
<comment type="catalytic activity">
    <reaction evidence="1">
        <text>L-aspartate 4-semialdehyde + pyruvate = (2S,4S)-4-hydroxy-2,3,4,5-tetrahydrodipicolinate + H2O + H(+)</text>
        <dbReference type="Rhea" id="RHEA:34171"/>
        <dbReference type="ChEBI" id="CHEBI:15361"/>
        <dbReference type="ChEBI" id="CHEBI:15377"/>
        <dbReference type="ChEBI" id="CHEBI:15378"/>
        <dbReference type="ChEBI" id="CHEBI:67139"/>
        <dbReference type="ChEBI" id="CHEBI:537519"/>
        <dbReference type="EC" id="4.3.3.7"/>
    </reaction>
</comment>
<comment type="pathway">
    <text evidence="1">Amino-acid biosynthesis; L-lysine biosynthesis via DAP pathway; (S)-tetrahydrodipicolinate from L-aspartate: step 3/4.</text>
</comment>
<comment type="subunit">
    <text evidence="1">Homotetramer; dimer of dimers.</text>
</comment>
<comment type="subcellular location">
    <subcellularLocation>
        <location evidence="1">Cytoplasm</location>
    </subcellularLocation>
</comment>
<comment type="similarity">
    <text evidence="1">Belongs to the DapA family.</text>
</comment>
<comment type="caution">
    <text evidence="2">Was originally thought to be a dihydrodipicolinate synthase (DHDPS), catalyzing the condensation of (S)-aspartate-beta-semialdehyde [(S)-ASA] and pyruvate to dihydrodipicolinate (DHDP). However, it was shown in E.coli that the product of the enzymatic reaction is not dihydrodipicolinate but in fact (4S)-4-hydroxy-2,3,4,5-tetrahydro-(2S)-dipicolinic acid (HTPA), and that the consecutive dehydration reaction leading to DHDP is not spontaneous but catalyzed by DapB.</text>
</comment>
<name>DAPA_METRJ</name>
<feature type="chain" id="PRO_0000340968" description="4-hydroxy-tetrahydrodipicolinate synthase">
    <location>
        <begin position="1"/>
        <end position="299"/>
    </location>
</feature>
<feature type="active site" description="Proton donor/acceptor" evidence="1">
    <location>
        <position position="139"/>
    </location>
</feature>
<feature type="active site" description="Schiff-base intermediate with substrate" evidence="1">
    <location>
        <position position="167"/>
    </location>
</feature>
<feature type="binding site" evidence="1">
    <location>
        <position position="51"/>
    </location>
    <ligand>
        <name>pyruvate</name>
        <dbReference type="ChEBI" id="CHEBI:15361"/>
    </ligand>
</feature>
<feature type="binding site" evidence="1">
    <location>
        <position position="209"/>
    </location>
    <ligand>
        <name>pyruvate</name>
        <dbReference type="ChEBI" id="CHEBI:15361"/>
    </ligand>
</feature>
<feature type="site" description="Part of a proton relay during catalysis" evidence="1">
    <location>
        <position position="50"/>
    </location>
</feature>
<feature type="site" description="Part of a proton relay during catalysis" evidence="1">
    <location>
        <position position="113"/>
    </location>
</feature>
<keyword id="KW-0028">Amino-acid biosynthesis</keyword>
<keyword id="KW-0963">Cytoplasm</keyword>
<keyword id="KW-0220">Diaminopimelate biosynthesis</keyword>
<keyword id="KW-0456">Lyase</keyword>
<keyword id="KW-0457">Lysine biosynthesis</keyword>
<keyword id="KW-0704">Schiff base</keyword>
<proteinExistence type="inferred from homology"/>
<reference key="1">
    <citation type="submission" date="2008-03" db="EMBL/GenBank/DDBJ databases">
        <title>Complete sequence of chromosome of Methylobacterium radiotolerans JCM 2831.</title>
        <authorList>
            <consortium name="US DOE Joint Genome Institute"/>
            <person name="Copeland A."/>
            <person name="Lucas S."/>
            <person name="Lapidus A."/>
            <person name="Glavina del Rio T."/>
            <person name="Dalin E."/>
            <person name="Tice H."/>
            <person name="Bruce D."/>
            <person name="Goodwin L."/>
            <person name="Pitluck S."/>
            <person name="Kiss H."/>
            <person name="Brettin T."/>
            <person name="Detter J.C."/>
            <person name="Han C."/>
            <person name="Kuske C.R."/>
            <person name="Schmutz J."/>
            <person name="Larimer F."/>
            <person name="Land M."/>
            <person name="Hauser L."/>
            <person name="Kyrpides N."/>
            <person name="Mikhailova N."/>
            <person name="Marx C.J."/>
            <person name="Richardson P."/>
        </authorList>
    </citation>
    <scope>NUCLEOTIDE SEQUENCE [LARGE SCALE GENOMIC DNA]</scope>
    <source>
        <strain>ATCC 27329 / DSM 1819 / JCM 2831 / NBRC 15690 / NCIMB 10815 / 0-1</strain>
    </source>
</reference>
<accession>B1LTD9</accession>
<organism>
    <name type="scientific">Methylobacterium radiotolerans (strain ATCC 27329 / DSM 1819 / JCM 2831 / NBRC 15690 / NCIMB 10815 / 0-1)</name>
    <dbReference type="NCBI Taxonomy" id="426355"/>
    <lineage>
        <taxon>Bacteria</taxon>
        <taxon>Pseudomonadati</taxon>
        <taxon>Pseudomonadota</taxon>
        <taxon>Alphaproteobacteria</taxon>
        <taxon>Hyphomicrobiales</taxon>
        <taxon>Methylobacteriaceae</taxon>
        <taxon>Methylobacterium</taxon>
    </lineage>
</organism>
<protein>
    <recommendedName>
        <fullName evidence="1">4-hydroxy-tetrahydrodipicolinate synthase</fullName>
        <shortName evidence="1">HTPA synthase</shortName>
        <ecNumber evidence="1">4.3.3.7</ecNumber>
    </recommendedName>
</protein>
<sequence>MTEMTGSRLRGSLTALVTPFRDGAFDEAAFRKFVRWQIEQGSHGLVPTGTTGESPTLTHSEHDRVVEACIDEAGGRVPVVAGAGSNSTAEAVERAQHAERAGADAVLVVTPYYNKPTQAGLYAHFKAVNDAVGIPIIIYNIPPRSVIDMSVETMARLFELKNIAGVKDATAKIDRVSQQRQAMGDSFIQLSGEDATALGYNAHGGHGCISVVANVAPRLCADLQEATLAGDYAKALTLQDRLFPLQTGLFAEANPAPVKYALSRLGHMTDELRLPLVPVTEPTKRIVDDALRHAGLLVD</sequence>
<evidence type="ECO:0000255" key="1">
    <source>
        <dbReference type="HAMAP-Rule" id="MF_00418"/>
    </source>
</evidence>
<evidence type="ECO:0000305" key="2"/>
<dbReference type="EC" id="4.3.3.7" evidence="1"/>
<dbReference type="EMBL" id="CP001001">
    <property type="protein sequence ID" value="ACB23885.1"/>
    <property type="molecule type" value="Genomic_DNA"/>
</dbReference>
<dbReference type="RefSeq" id="WP_012318871.1">
    <property type="nucleotide sequence ID" value="NC_010505.1"/>
</dbReference>
<dbReference type="SMR" id="B1LTD9"/>
<dbReference type="STRING" id="426355.Mrad2831_1890"/>
<dbReference type="GeneID" id="6137919"/>
<dbReference type="KEGG" id="mrd:Mrad2831_1890"/>
<dbReference type="PATRIC" id="fig|426355.14.peg.1949"/>
<dbReference type="eggNOG" id="COG0329">
    <property type="taxonomic scope" value="Bacteria"/>
</dbReference>
<dbReference type="HOGENOM" id="CLU_049343_7_1_5"/>
<dbReference type="OrthoDB" id="9782828at2"/>
<dbReference type="UniPathway" id="UPA00034">
    <property type="reaction ID" value="UER00017"/>
</dbReference>
<dbReference type="Proteomes" id="UP000006589">
    <property type="component" value="Chromosome"/>
</dbReference>
<dbReference type="GO" id="GO:0005829">
    <property type="term" value="C:cytosol"/>
    <property type="evidence" value="ECO:0007669"/>
    <property type="project" value="TreeGrafter"/>
</dbReference>
<dbReference type="GO" id="GO:0008840">
    <property type="term" value="F:4-hydroxy-tetrahydrodipicolinate synthase activity"/>
    <property type="evidence" value="ECO:0007669"/>
    <property type="project" value="UniProtKB-UniRule"/>
</dbReference>
<dbReference type="GO" id="GO:0019877">
    <property type="term" value="P:diaminopimelate biosynthetic process"/>
    <property type="evidence" value="ECO:0007669"/>
    <property type="project" value="UniProtKB-UniRule"/>
</dbReference>
<dbReference type="GO" id="GO:0009089">
    <property type="term" value="P:lysine biosynthetic process via diaminopimelate"/>
    <property type="evidence" value="ECO:0007669"/>
    <property type="project" value="UniProtKB-UniRule"/>
</dbReference>
<dbReference type="CDD" id="cd00950">
    <property type="entry name" value="DHDPS"/>
    <property type="match status" value="1"/>
</dbReference>
<dbReference type="Gene3D" id="3.20.20.70">
    <property type="entry name" value="Aldolase class I"/>
    <property type="match status" value="1"/>
</dbReference>
<dbReference type="HAMAP" id="MF_00418">
    <property type="entry name" value="DapA"/>
    <property type="match status" value="1"/>
</dbReference>
<dbReference type="InterPro" id="IPR013785">
    <property type="entry name" value="Aldolase_TIM"/>
</dbReference>
<dbReference type="InterPro" id="IPR005263">
    <property type="entry name" value="DapA"/>
</dbReference>
<dbReference type="InterPro" id="IPR002220">
    <property type="entry name" value="DapA-like"/>
</dbReference>
<dbReference type="InterPro" id="IPR020625">
    <property type="entry name" value="Schiff_base-form_aldolases_AS"/>
</dbReference>
<dbReference type="InterPro" id="IPR020624">
    <property type="entry name" value="Schiff_base-form_aldolases_CS"/>
</dbReference>
<dbReference type="NCBIfam" id="TIGR00674">
    <property type="entry name" value="dapA"/>
    <property type="match status" value="1"/>
</dbReference>
<dbReference type="PANTHER" id="PTHR12128:SF66">
    <property type="entry name" value="4-HYDROXY-2-OXOGLUTARATE ALDOLASE, MITOCHONDRIAL"/>
    <property type="match status" value="1"/>
</dbReference>
<dbReference type="PANTHER" id="PTHR12128">
    <property type="entry name" value="DIHYDRODIPICOLINATE SYNTHASE"/>
    <property type="match status" value="1"/>
</dbReference>
<dbReference type="Pfam" id="PF00701">
    <property type="entry name" value="DHDPS"/>
    <property type="match status" value="1"/>
</dbReference>
<dbReference type="PIRSF" id="PIRSF001365">
    <property type="entry name" value="DHDPS"/>
    <property type="match status" value="1"/>
</dbReference>
<dbReference type="PRINTS" id="PR00146">
    <property type="entry name" value="DHPICSNTHASE"/>
</dbReference>
<dbReference type="SMART" id="SM01130">
    <property type="entry name" value="DHDPS"/>
    <property type="match status" value="1"/>
</dbReference>
<dbReference type="SUPFAM" id="SSF51569">
    <property type="entry name" value="Aldolase"/>
    <property type="match status" value="1"/>
</dbReference>
<dbReference type="PROSITE" id="PS00665">
    <property type="entry name" value="DHDPS_1"/>
    <property type="match status" value="1"/>
</dbReference>
<dbReference type="PROSITE" id="PS00666">
    <property type="entry name" value="DHDPS_2"/>
    <property type="match status" value="1"/>
</dbReference>